<proteinExistence type="inferred from homology"/>
<organism>
    <name type="scientific">Pyrococcus abyssi (strain GE5 / Orsay)</name>
    <dbReference type="NCBI Taxonomy" id="272844"/>
    <lineage>
        <taxon>Archaea</taxon>
        <taxon>Methanobacteriati</taxon>
        <taxon>Methanobacteriota</taxon>
        <taxon>Thermococci</taxon>
        <taxon>Thermococcales</taxon>
        <taxon>Thermococcaceae</taxon>
        <taxon>Pyrococcus</taxon>
    </lineage>
</organism>
<evidence type="ECO:0000255" key="1">
    <source>
        <dbReference type="HAMAP-Rule" id="MF_00055"/>
    </source>
</evidence>
<feature type="chain" id="PRO_0000134384" description="MEMO1 family protein PYRAB05390">
    <location>
        <begin position="1"/>
        <end position="291"/>
    </location>
</feature>
<sequence length="291" mass="32515">MIRYPAVAGQFYPEGETLVEMLEEFFRDLGEQGNSRKITAGVAPHAGYVFSGYTASRTYKAIYEDGLPETFVIFGPNHTGLGSPIAVYPEGDWVTPLGKVKIDSELAKEIVKLSKIADLDDLAHKYEHSIEVQLPFIQYIAEKAGTDFRIVPITLGIQDEDVSEALGRAVFEAAEALGRDVIVIASTDFMHYGSFYGYVPFRGRANELPNMVKEWDMRIIRRILDFDLKGMFEEIREMDHTMCGPGGVGAGIVYSRLMNAREAELLHYTTSFEVSRSTDAIVGYASIVMRR</sequence>
<comment type="similarity">
    <text evidence="1">Belongs to the MEMO1 family.</text>
</comment>
<name>Y539_PYRAB</name>
<gene>
    <name type="ordered locus">PYRAB05390</name>
    <name type="ORF">PAB0370</name>
</gene>
<reference key="1">
    <citation type="journal article" date="2003" name="Mol. Microbiol.">
        <title>An integrated analysis of the genome of the hyperthermophilic archaeon Pyrococcus abyssi.</title>
        <authorList>
            <person name="Cohen G.N."/>
            <person name="Barbe V."/>
            <person name="Flament D."/>
            <person name="Galperin M."/>
            <person name="Heilig R."/>
            <person name="Lecompte O."/>
            <person name="Poch O."/>
            <person name="Prieur D."/>
            <person name="Querellou J."/>
            <person name="Ripp R."/>
            <person name="Thierry J.-C."/>
            <person name="Van der Oost J."/>
            <person name="Weissenbach J."/>
            <person name="Zivanovic Y."/>
            <person name="Forterre P."/>
        </authorList>
    </citation>
    <scope>NUCLEOTIDE SEQUENCE [LARGE SCALE GENOMIC DNA]</scope>
    <source>
        <strain>GE5 / Orsay</strain>
    </source>
</reference>
<reference key="2">
    <citation type="journal article" date="2012" name="Curr. Microbiol.">
        <title>Re-annotation of two hyperthermophilic archaea Pyrococcus abyssi GE5 and Pyrococcus furiosus DSM 3638.</title>
        <authorList>
            <person name="Gao J."/>
            <person name="Wang J."/>
        </authorList>
    </citation>
    <scope>GENOME REANNOTATION</scope>
    <source>
        <strain>GE5 / Orsay</strain>
    </source>
</reference>
<protein>
    <recommendedName>
        <fullName evidence="1">MEMO1 family protein PYRAB05390</fullName>
    </recommendedName>
</protein>
<accession>Q9V189</accession>
<accession>G8ZGP9</accession>
<dbReference type="EMBL" id="AJ248284">
    <property type="protein sequence ID" value="CAB49461.1"/>
    <property type="molecule type" value="Genomic_DNA"/>
</dbReference>
<dbReference type="EMBL" id="HE613800">
    <property type="protein sequence ID" value="CCE69928.1"/>
    <property type="molecule type" value="Genomic_DNA"/>
</dbReference>
<dbReference type="PIR" id="F75172">
    <property type="entry name" value="F75172"/>
</dbReference>
<dbReference type="RefSeq" id="WP_010867663.1">
    <property type="nucleotide sequence ID" value="NC_000868.1"/>
</dbReference>
<dbReference type="SMR" id="Q9V189"/>
<dbReference type="STRING" id="272844.PAB0370"/>
<dbReference type="KEGG" id="pab:PAB0370"/>
<dbReference type="PATRIC" id="fig|272844.11.peg.574"/>
<dbReference type="eggNOG" id="arCOG01728">
    <property type="taxonomic scope" value="Archaea"/>
</dbReference>
<dbReference type="HOGENOM" id="CLU_038085_2_0_2"/>
<dbReference type="OrthoDB" id="372162at2157"/>
<dbReference type="PhylomeDB" id="Q9V189"/>
<dbReference type="Proteomes" id="UP000000810">
    <property type="component" value="Chromosome"/>
</dbReference>
<dbReference type="Proteomes" id="UP000009139">
    <property type="component" value="Chromosome"/>
</dbReference>
<dbReference type="CDD" id="cd07361">
    <property type="entry name" value="MEMO_like"/>
    <property type="match status" value="1"/>
</dbReference>
<dbReference type="Gene3D" id="3.40.830.10">
    <property type="entry name" value="LigB-like"/>
    <property type="match status" value="1"/>
</dbReference>
<dbReference type="HAMAP" id="MF_00055">
    <property type="entry name" value="MEMO1"/>
    <property type="match status" value="1"/>
</dbReference>
<dbReference type="InterPro" id="IPR002737">
    <property type="entry name" value="MEMO1_fam"/>
</dbReference>
<dbReference type="NCBIfam" id="TIGR04336">
    <property type="entry name" value="AmmeMemoSam_B"/>
    <property type="match status" value="1"/>
</dbReference>
<dbReference type="NCBIfam" id="NF001987">
    <property type="entry name" value="PRK00782.1"/>
    <property type="match status" value="1"/>
</dbReference>
<dbReference type="PANTHER" id="PTHR11060">
    <property type="entry name" value="PROTEIN MEMO1"/>
    <property type="match status" value="1"/>
</dbReference>
<dbReference type="PANTHER" id="PTHR11060:SF0">
    <property type="entry name" value="PROTEIN MEMO1"/>
    <property type="match status" value="1"/>
</dbReference>
<dbReference type="Pfam" id="PF01875">
    <property type="entry name" value="Memo"/>
    <property type="match status" value="1"/>
</dbReference>
<dbReference type="SUPFAM" id="SSF53213">
    <property type="entry name" value="LigB-like"/>
    <property type="match status" value="1"/>
</dbReference>